<gene>
    <name evidence="1" type="primary">rimP</name>
    <name type="ordered locus">CKO_04571</name>
</gene>
<proteinExistence type="inferred from homology"/>
<organism>
    <name type="scientific">Citrobacter koseri (strain ATCC BAA-895 / CDC 4225-83 / SGSC4696)</name>
    <dbReference type="NCBI Taxonomy" id="290338"/>
    <lineage>
        <taxon>Bacteria</taxon>
        <taxon>Pseudomonadati</taxon>
        <taxon>Pseudomonadota</taxon>
        <taxon>Gammaproteobacteria</taxon>
        <taxon>Enterobacterales</taxon>
        <taxon>Enterobacteriaceae</taxon>
        <taxon>Citrobacter</taxon>
    </lineage>
</organism>
<keyword id="KW-0963">Cytoplasm</keyword>
<keyword id="KW-1185">Reference proteome</keyword>
<keyword id="KW-0690">Ribosome biogenesis</keyword>
<sequence>MGLSTLEQKLTEMITAPVEALGYELVGIEFIRGRTSTLRIYIDSEDGINVDDCADVSHQVSAVLDVEDPITVAYNLEVSSPGLDRPMFTAEHYARFLGEEVTLVLRMAVQNRRKWQGVIKAVDGEMITVTVEGKDEVFALSNIQKANLVPHF</sequence>
<accession>A8AQ61</accession>
<protein>
    <recommendedName>
        <fullName evidence="1">Ribosome maturation factor RimP</fullName>
    </recommendedName>
</protein>
<comment type="function">
    <text evidence="1">Required for maturation of 30S ribosomal subunits.</text>
</comment>
<comment type="subcellular location">
    <subcellularLocation>
        <location evidence="1">Cytoplasm</location>
    </subcellularLocation>
</comment>
<comment type="similarity">
    <text evidence="1">Belongs to the RimP family.</text>
</comment>
<comment type="sequence caution" evidence="2">
    <conflict type="erroneous initiation">
        <sequence resource="EMBL-CDS" id="ABV15624"/>
    </conflict>
</comment>
<feature type="chain" id="PRO_0000384629" description="Ribosome maturation factor RimP">
    <location>
        <begin position="1"/>
        <end position="152"/>
    </location>
</feature>
<name>RIMP_CITK8</name>
<dbReference type="EMBL" id="CP000822">
    <property type="protein sequence ID" value="ABV15624.1"/>
    <property type="status" value="ALT_INIT"/>
    <property type="molecule type" value="Genomic_DNA"/>
</dbReference>
<dbReference type="SMR" id="A8AQ61"/>
<dbReference type="STRING" id="290338.CKO_04571"/>
<dbReference type="KEGG" id="cko:CKO_04571"/>
<dbReference type="HOGENOM" id="CLU_070525_1_1_6"/>
<dbReference type="Proteomes" id="UP000008148">
    <property type="component" value="Chromosome"/>
</dbReference>
<dbReference type="GO" id="GO:0005829">
    <property type="term" value="C:cytosol"/>
    <property type="evidence" value="ECO:0007669"/>
    <property type="project" value="TreeGrafter"/>
</dbReference>
<dbReference type="GO" id="GO:0000028">
    <property type="term" value="P:ribosomal small subunit assembly"/>
    <property type="evidence" value="ECO:0007669"/>
    <property type="project" value="TreeGrafter"/>
</dbReference>
<dbReference type="GO" id="GO:0006412">
    <property type="term" value="P:translation"/>
    <property type="evidence" value="ECO:0007669"/>
    <property type="project" value="TreeGrafter"/>
</dbReference>
<dbReference type="CDD" id="cd01734">
    <property type="entry name" value="YlxS_C"/>
    <property type="match status" value="1"/>
</dbReference>
<dbReference type="FunFam" id="2.30.30.180:FF:000001">
    <property type="entry name" value="Ribosome maturation factor RimP"/>
    <property type="match status" value="1"/>
</dbReference>
<dbReference type="FunFam" id="3.30.300.70:FF:000001">
    <property type="entry name" value="Ribosome maturation factor RimP"/>
    <property type="match status" value="1"/>
</dbReference>
<dbReference type="Gene3D" id="2.30.30.180">
    <property type="entry name" value="Ribosome maturation factor RimP, C-terminal domain"/>
    <property type="match status" value="1"/>
</dbReference>
<dbReference type="Gene3D" id="3.30.300.70">
    <property type="entry name" value="RimP-like superfamily, N-terminal"/>
    <property type="match status" value="1"/>
</dbReference>
<dbReference type="HAMAP" id="MF_01077">
    <property type="entry name" value="RimP"/>
    <property type="match status" value="1"/>
</dbReference>
<dbReference type="InterPro" id="IPR003728">
    <property type="entry name" value="Ribosome_maturation_RimP"/>
</dbReference>
<dbReference type="InterPro" id="IPR028998">
    <property type="entry name" value="RimP_C"/>
</dbReference>
<dbReference type="InterPro" id="IPR036847">
    <property type="entry name" value="RimP_C_sf"/>
</dbReference>
<dbReference type="InterPro" id="IPR028989">
    <property type="entry name" value="RimP_N"/>
</dbReference>
<dbReference type="InterPro" id="IPR035956">
    <property type="entry name" value="RimP_N_sf"/>
</dbReference>
<dbReference type="NCBIfam" id="NF000927">
    <property type="entry name" value="PRK00092.1-1"/>
    <property type="match status" value="1"/>
</dbReference>
<dbReference type="PANTHER" id="PTHR33867">
    <property type="entry name" value="RIBOSOME MATURATION FACTOR RIMP"/>
    <property type="match status" value="1"/>
</dbReference>
<dbReference type="PANTHER" id="PTHR33867:SF1">
    <property type="entry name" value="RIBOSOME MATURATION FACTOR RIMP"/>
    <property type="match status" value="1"/>
</dbReference>
<dbReference type="Pfam" id="PF17384">
    <property type="entry name" value="DUF150_C"/>
    <property type="match status" value="1"/>
</dbReference>
<dbReference type="Pfam" id="PF02576">
    <property type="entry name" value="RimP_N"/>
    <property type="match status" value="1"/>
</dbReference>
<dbReference type="SUPFAM" id="SSF74942">
    <property type="entry name" value="YhbC-like, C-terminal domain"/>
    <property type="match status" value="1"/>
</dbReference>
<dbReference type="SUPFAM" id="SSF75420">
    <property type="entry name" value="YhbC-like, N-terminal domain"/>
    <property type="match status" value="1"/>
</dbReference>
<reference key="1">
    <citation type="submission" date="2007-08" db="EMBL/GenBank/DDBJ databases">
        <authorList>
            <consortium name="The Citrobacter koseri Genome Sequencing Project"/>
            <person name="McClelland M."/>
            <person name="Sanderson E.K."/>
            <person name="Porwollik S."/>
            <person name="Spieth J."/>
            <person name="Clifton W.S."/>
            <person name="Latreille P."/>
            <person name="Courtney L."/>
            <person name="Wang C."/>
            <person name="Pepin K."/>
            <person name="Bhonagiri V."/>
            <person name="Nash W."/>
            <person name="Johnson M."/>
            <person name="Thiruvilangam P."/>
            <person name="Wilson R."/>
        </authorList>
    </citation>
    <scope>NUCLEOTIDE SEQUENCE [LARGE SCALE GENOMIC DNA]</scope>
    <source>
        <strain>ATCC BAA-895 / CDC 4225-83 / SGSC4696</strain>
    </source>
</reference>
<evidence type="ECO:0000255" key="1">
    <source>
        <dbReference type="HAMAP-Rule" id="MF_01077"/>
    </source>
</evidence>
<evidence type="ECO:0000305" key="2"/>